<dbReference type="EMBL" id="CP001364">
    <property type="protein sequence ID" value="ACM53330.1"/>
    <property type="molecule type" value="Genomic_DNA"/>
</dbReference>
<dbReference type="SMR" id="B9LEY6"/>
<dbReference type="KEGG" id="chl:Chy400_1924"/>
<dbReference type="HOGENOM" id="CLU_009885_1_0_0"/>
<dbReference type="OrthoDB" id="9805101at2"/>
<dbReference type="GO" id="GO:0005886">
    <property type="term" value="C:plasma membrane"/>
    <property type="evidence" value="ECO:0007669"/>
    <property type="project" value="UniProtKB-SubCell"/>
</dbReference>
<dbReference type="GO" id="GO:0008270">
    <property type="term" value="F:zinc ion binding"/>
    <property type="evidence" value="ECO:0007669"/>
    <property type="project" value="UniProtKB-UniRule"/>
</dbReference>
<dbReference type="HAMAP" id="MF_01871">
    <property type="entry name" value="DabA"/>
    <property type="match status" value="1"/>
</dbReference>
<dbReference type="InterPro" id="IPR018752">
    <property type="entry name" value="DabA"/>
</dbReference>
<dbReference type="PANTHER" id="PTHR38344:SF1">
    <property type="entry name" value="INORGANIC CARBON TRANSPORTER SUBUNIT DABA-RELATED"/>
    <property type="match status" value="1"/>
</dbReference>
<dbReference type="PANTHER" id="PTHR38344">
    <property type="entry name" value="UPF0753 PROTEIN AQ_863"/>
    <property type="match status" value="1"/>
</dbReference>
<dbReference type="Pfam" id="PF10070">
    <property type="entry name" value="DabA"/>
    <property type="match status" value="1"/>
</dbReference>
<keyword id="KW-1003">Cell membrane</keyword>
<keyword id="KW-0472">Membrane</keyword>
<keyword id="KW-0479">Metal-binding</keyword>
<keyword id="KW-0813">Transport</keyword>
<keyword id="KW-0862">Zinc</keyword>
<sequence>MTMIETQLRSLLVTTKPIRDLTIDAVIAATKRAEQRIAPLWPLRYFVAVNPYLGLIDHTFADAAQLLARRTDARMTAPRDFYAQAIKSGRITDADLAAAIADEKLPSPAPASVAALKEFAFSKDPDPATTPLPTIADVATTVTGINWADFVTDAISTWAGAYFDLGQSYWRSPWAQLPAYAAWRAEAAHDRTAQARGVHGMRRALRELPETALETIVTAVKMLNIPEQGLEAYLHRLLLTIHGWASYARYLRWDAELYGGEDHTLTDLLAIRLVWEVALWHSFADRGVAEAWHKCKPELSNEQLTETARYALAGNILLQRAFEKSYQRQLFARLGTARPATTPQRKRVQAAFCIDVRSEIFRRALETTTDDIETIGFAGFFGFPIEYVPLAEVHGGAQCPVLLTPQFVIAEAVDGASTDEVAKIIERRALRQRVAKAWRMFKFAPISCFGFVGPVGLAYLRKLVLDTLGITRPVPHPAQFGLDARTREHVAPILEPGLIGDRPTGMTLEQRVAAAAGALKAMSLTDNFARIVLLAGHGSTTVNNPHATGLDCGACGGHTGEANVRVAVRILNDPAVRTKLKEQGIVIPDDTVFVAALHDTTTDDITIFDKHMIPASHADDLKRLEADLAAAGRLARAERAALLKIDRKADIDRQVRQRSKDWSQVRPEWGLAGCAAFIAAPRDRTAGIKLDGRSFLHSYTWQQDSDFSVLELIMTAPMIVASWINLQYYGSTVDNRLFGSGNKTLHNVVGTLGVLEGNAGDLRVGLPWQSVHDGENYVHEPMRLHVLIEAPIPAMTAIIAKHEQVRQLLDNGWLYLFALDDRGVVTHKYAGNLQWEPV</sequence>
<comment type="function">
    <text evidence="1">Part of an energy-coupled inorganic carbon pump.</text>
</comment>
<comment type="cofactor">
    <cofactor evidence="1">
        <name>Zn(2+)</name>
        <dbReference type="ChEBI" id="CHEBI:29105"/>
    </cofactor>
</comment>
<comment type="subunit">
    <text evidence="1">Forms a complex with DabB.</text>
</comment>
<comment type="subcellular location">
    <subcellularLocation>
        <location evidence="1">Cell membrane</location>
        <topology evidence="1">Peripheral membrane protein</topology>
    </subcellularLocation>
</comment>
<comment type="similarity">
    <text evidence="1">Belongs to the inorganic carbon transporter (TC 9.A.2) DabA family.</text>
</comment>
<organism>
    <name type="scientific">Chloroflexus aurantiacus (strain ATCC 29364 / DSM 637 / Y-400-fl)</name>
    <dbReference type="NCBI Taxonomy" id="480224"/>
    <lineage>
        <taxon>Bacteria</taxon>
        <taxon>Bacillati</taxon>
        <taxon>Chloroflexota</taxon>
        <taxon>Chloroflexia</taxon>
        <taxon>Chloroflexales</taxon>
        <taxon>Chloroflexineae</taxon>
        <taxon>Chloroflexaceae</taxon>
        <taxon>Chloroflexus</taxon>
    </lineage>
</organism>
<feature type="chain" id="PRO_0000387257" description="Probable inorganic carbon transporter subunit DabA">
    <location>
        <begin position="1"/>
        <end position="838"/>
    </location>
</feature>
<feature type="binding site" evidence="1">
    <location>
        <position position="353"/>
    </location>
    <ligand>
        <name>Zn(2+)</name>
        <dbReference type="ChEBI" id="CHEBI:29105"/>
    </ligand>
</feature>
<feature type="binding site" evidence="1">
    <location>
        <position position="355"/>
    </location>
    <ligand>
        <name>Zn(2+)</name>
        <dbReference type="ChEBI" id="CHEBI:29105"/>
    </ligand>
</feature>
<feature type="binding site" evidence="1">
    <location>
        <position position="537"/>
    </location>
    <ligand>
        <name>Zn(2+)</name>
        <dbReference type="ChEBI" id="CHEBI:29105"/>
    </ligand>
</feature>
<feature type="binding site" evidence="1">
    <location>
        <position position="552"/>
    </location>
    <ligand>
        <name>Zn(2+)</name>
        <dbReference type="ChEBI" id="CHEBI:29105"/>
    </ligand>
</feature>
<name>DABA_CHLSY</name>
<proteinExistence type="inferred from homology"/>
<evidence type="ECO:0000255" key="1">
    <source>
        <dbReference type="HAMAP-Rule" id="MF_01871"/>
    </source>
</evidence>
<reference key="1">
    <citation type="submission" date="2009-01" db="EMBL/GenBank/DDBJ databases">
        <title>Complete sequence of Chloroflexus sp. Y-400-fl.</title>
        <authorList>
            <consortium name="US DOE Joint Genome Institute"/>
            <person name="Lucas S."/>
            <person name="Copeland A."/>
            <person name="Lapidus A."/>
            <person name="Glavina del Rio T."/>
            <person name="Dalin E."/>
            <person name="Tice H."/>
            <person name="Bruce D."/>
            <person name="Goodwin L."/>
            <person name="Pitluck S."/>
            <person name="Sims D."/>
            <person name="Kiss H."/>
            <person name="Brettin T."/>
            <person name="Detter J.C."/>
            <person name="Han C."/>
            <person name="Larimer F."/>
            <person name="Land M."/>
            <person name="Hauser L."/>
            <person name="Kyrpides N."/>
            <person name="Ovchinnikova G."/>
            <person name="Bryant D.A."/>
            <person name="Richardson P."/>
        </authorList>
    </citation>
    <scope>NUCLEOTIDE SEQUENCE [LARGE SCALE GENOMIC DNA]</scope>
    <source>
        <strain>ATCC 29364 / DSM 637 / Y-400-fl</strain>
    </source>
</reference>
<protein>
    <recommendedName>
        <fullName evidence="1">Probable inorganic carbon transporter subunit DabA</fullName>
    </recommendedName>
</protein>
<accession>B9LEY6</accession>
<gene>
    <name evidence="1" type="primary">dabA</name>
    <name type="ordered locus">Chy400_1924</name>
</gene>